<comment type="function">
    <text evidence="1">DNA-dependent RNA polymerase catalyzes the transcription of DNA into RNA using the four ribonucleoside triphosphates as substrates.</text>
</comment>
<comment type="catalytic activity">
    <reaction evidence="1">
        <text>RNA(n) + a ribonucleoside 5'-triphosphate = RNA(n+1) + diphosphate</text>
        <dbReference type="Rhea" id="RHEA:21248"/>
        <dbReference type="Rhea" id="RHEA-COMP:14527"/>
        <dbReference type="Rhea" id="RHEA-COMP:17342"/>
        <dbReference type="ChEBI" id="CHEBI:33019"/>
        <dbReference type="ChEBI" id="CHEBI:61557"/>
        <dbReference type="ChEBI" id="CHEBI:140395"/>
        <dbReference type="EC" id="2.7.7.6"/>
    </reaction>
</comment>
<comment type="subunit">
    <text evidence="1">The RNAP catalytic core consists of 2 alpha, 1 beta, 1 beta' and 1 omega subunit. When a sigma factor is associated with the core the holoenzyme is formed, which can initiate transcription.</text>
</comment>
<comment type="similarity">
    <text evidence="1">Belongs to the RNA polymerase beta chain family.</text>
</comment>
<gene>
    <name evidence="1" type="primary">rpoB</name>
    <name type="ordered locus">Mflv_5097</name>
</gene>
<evidence type="ECO:0000255" key="1">
    <source>
        <dbReference type="HAMAP-Rule" id="MF_01321"/>
    </source>
</evidence>
<keyword id="KW-0240">DNA-directed RNA polymerase</keyword>
<keyword id="KW-0548">Nucleotidyltransferase</keyword>
<keyword id="KW-0804">Transcription</keyword>
<keyword id="KW-0808">Transferase</keyword>
<name>RPOB_MYCGI</name>
<reference key="1">
    <citation type="submission" date="2007-04" db="EMBL/GenBank/DDBJ databases">
        <title>Complete sequence of chromosome of Mycobacterium gilvum PYR-GCK.</title>
        <authorList>
            <consortium name="US DOE Joint Genome Institute"/>
            <person name="Copeland A."/>
            <person name="Lucas S."/>
            <person name="Lapidus A."/>
            <person name="Barry K."/>
            <person name="Detter J.C."/>
            <person name="Glavina del Rio T."/>
            <person name="Hammon N."/>
            <person name="Israni S."/>
            <person name="Dalin E."/>
            <person name="Tice H."/>
            <person name="Pitluck S."/>
            <person name="Chain P."/>
            <person name="Malfatti S."/>
            <person name="Shin M."/>
            <person name="Vergez L."/>
            <person name="Schmutz J."/>
            <person name="Larimer F."/>
            <person name="Land M."/>
            <person name="Hauser L."/>
            <person name="Kyrpides N."/>
            <person name="Mikhailova N."/>
            <person name="Miller C."/>
            <person name="Richardson P."/>
        </authorList>
    </citation>
    <scope>NUCLEOTIDE SEQUENCE [LARGE SCALE GENOMIC DNA]</scope>
    <source>
        <strain>PYR-GCK</strain>
    </source>
</reference>
<protein>
    <recommendedName>
        <fullName evidence="1">DNA-directed RNA polymerase subunit beta</fullName>
        <shortName evidence="1">RNAP subunit beta</shortName>
        <ecNumber evidence="1">2.7.7.6</ecNumber>
    </recommendedName>
    <alternativeName>
        <fullName evidence="1">RNA polymerase subunit beta</fullName>
    </alternativeName>
    <alternativeName>
        <fullName evidence="1">Transcriptase subunit beta</fullName>
    </alternativeName>
</protein>
<organism>
    <name type="scientific">Mycolicibacterium gilvum (strain PYR-GCK)</name>
    <name type="common">Mycobacterium gilvum (strain PYR-GCK)</name>
    <dbReference type="NCBI Taxonomy" id="350054"/>
    <lineage>
        <taxon>Bacteria</taxon>
        <taxon>Bacillati</taxon>
        <taxon>Actinomycetota</taxon>
        <taxon>Actinomycetes</taxon>
        <taxon>Mycobacteriales</taxon>
        <taxon>Mycobacteriaceae</taxon>
        <taxon>Mycolicibacterium</taxon>
    </lineage>
</organism>
<dbReference type="EC" id="2.7.7.6" evidence="1"/>
<dbReference type="EMBL" id="CP000656">
    <property type="protein sequence ID" value="ABP47563.1"/>
    <property type="molecule type" value="Genomic_DNA"/>
</dbReference>
<dbReference type="SMR" id="A4T1P4"/>
<dbReference type="STRING" id="350054.Mflv_5097"/>
<dbReference type="KEGG" id="mgi:Mflv_5097"/>
<dbReference type="eggNOG" id="COG0085">
    <property type="taxonomic scope" value="Bacteria"/>
</dbReference>
<dbReference type="HOGENOM" id="CLU_000524_4_1_11"/>
<dbReference type="OrthoDB" id="9803954at2"/>
<dbReference type="GO" id="GO:0000428">
    <property type="term" value="C:DNA-directed RNA polymerase complex"/>
    <property type="evidence" value="ECO:0007669"/>
    <property type="project" value="UniProtKB-KW"/>
</dbReference>
<dbReference type="GO" id="GO:0003677">
    <property type="term" value="F:DNA binding"/>
    <property type="evidence" value="ECO:0007669"/>
    <property type="project" value="UniProtKB-UniRule"/>
</dbReference>
<dbReference type="GO" id="GO:0003899">
    <property type="term" value="F:DNA-directed RNA polymerase activity"/>
    <property type="evidence" value="ECO:0007669"/>
    <property type="project" value="UniProtKB-UniRule"/>
</dbReference>
<dbReference type="GO" id="GO:0032549">
    <property type="term" value="F:ribonucleoside binding"/>
    <property type="evidence" value="ECO:0007669"/>
    <property type="project" value="InterPro"/>
</dbReference>
<dbReference type="GO" id="GO:0006351">
    <property type="term" value="P:DNA-templated transcription"/>
    <property type="evidence" value="ECO:0007669"/>
    <property type="project" value="UniProtKB-UniRule"/>
</dbReference>
<dbReference type="CDD" id="cd00653">
    <property type="entry name" value="RNA_pol_B_RPB2"/>
    <property type="match status" value="1"/>
</dbReference>
<dbReference type="FunFam" id="2.40.50.150:FF:000001">
    <property type="entry name" value="DNA-directed RNA polymerase subunit beta"/>
    <property type="match status" value="1"/>
</dbReference>
<dbReference type="FunFam" id="3.90.1800.10:FF:000005">
    <property type="entry name" value="DNA-directed RNA polymerase subunit beta"/>
    <property type="match status" value="1"/>
</dbReference>
<dbReference type="Gene3D" id="2.40.50.100">
    <property type="match status" value="1"/>
</dbReference>
<dbReference type="Gene3D" id="2.40.50.150">
    <property type="match status" value="1"/>
</dbReference>
<dbReference type="Gene3D" id="3.90.1100.10">
    <property type="match status" value="1"/>
</dbReference>
<dbReference type="Gene3D" id="2.30.150.10">
    <property type="entry name" value="DNA-directed RNA polymerase, beta subunit, external 1 domain"/>
    <property type="match status" value="1"/>
</dbReference>
<dbReference type="Gene3D" id="2.40.270.10">
    <property type="entry name" value="DNA-directed RNA polymerase, subunit 2, domain 6"/>
    <property type="match status" value="1"/>
</dbReference>
<dbReference type="Gene3D" id="3.90.1800.10">
    <property type="entry name" value="RNA polymerase alpha subunit dimerisation domain"/>
    <property type="match status" value="1"/>
</dbReference>
<dbReference type="Gene3D" id="3.90.1110.10">
    <property type="entry name" value="RNA polymerase Rpb2, domain 2"/>
    <property type="match status" value="1"/>
</dbReference>
<dbReference type="HAMAP" id="MF_01321">
    <property type="entry name" value="RNApol_bact_RpoB"/>
    <property type="match status" value="1"/>
</dbReference>
<dbReference type="InterPro" id="IPR042107">
    <property type="entry name" value="DNA-dir_RNA_pol_bsu_ext_1_sf"/>
</dbReference>
<dbReference type="InterPro" id="IPR019462">
    <property type="entry name" value="DNA-dir_RNA_pol_bsu_external_1"/>
</dbReference>
<dbReference type="InterPro" id="IPR015712">
    <property type="entry name" value="DNA-dir_RNA_pol_su2"/>
</dbReference>
<dbReference type="InterPro" id="IPR007120">
    <property type="entry name" value="DNA-dir_RNAP_su2_dom"/>
</dbReference>
<dbReference type="InterPro" id="IPR037033">
    <property type="entry name" value="DNA-dir_RNAP_su2_hyb_sf"/>
</dbReference>
<dbReference type="InterPro" id="IPR010243">
    <property type="entry name" value="RNA_pol_bsu_bac"/>
</dbReference>
<dbReference type="InterPro" id="IPR007121">
    <property type="entry name" value="RNA_pol_bsu_CS"/>
</dbReference>
<dbReference type="InterPro" id="IPR007644">
    <property type="entry name" value="RNA_pol_bsu_protrusion"/>
</dbReference>
<dbReference type="InterPro" id="IPR007642">
    <property type="entry name" value="RNA_pol_Rpb2_2"/>
</dbReference>
<dbReference type="InterPro" id="IPR037034">
    <property type="entry name" value="RNA_pol_Rpb2_2_sf"/>
</dbReference>
<dbReference type="InterPro" id="IPR007645">
    <property type="entry name" value="RNA_pol_Rpb2_3"/>
</dbReference>
<dbReference type="InterPro" id="IPR007641">
    <property type="entry name" value="RNA_pol_Rpb2_7"/>
</dbReference>
<dbReference type="InterPro" id="IPR014724">
    <property type="entry name" value="RNA_pol_RPB2_OB-fold"/>
</dbReference>
<dbReference type="NCBIfam" id="NF001616">
    <property type="entry name" value="PRK00405.1"/>
    <property type="match status" value="1"/>
</dbReference>
<dbReference type="NCBIfam" id="TIGR02013">
    <property type="entry name" value="rpoB"/>
    <property type="match status" value="1"/>
</dbReference>
<dbReference type="PANTHER" id="PTHR20856">
    <property type="entry name" value="DNA-DIRECTED RNA POLYMERASE I SUBUNIT 2"/>
    <property type="match status" value="1"/>
</dbReference>
<dbReference type="Pfam" id="PF04563">
    <property type="entry name" value="RNA_pol_Rpb2_1"/>
    <property type="match status" value="1"/>
</dbReference>
<dbReference type="Pfam" id="PF04561">
    <property type="entry name" value="RNA_pol_Rpb2_2"/>
    <property type="match status" value="1"/>
</dbReference>
<dbReference type="Pfam" id="PF04565">
    <property type="entry name" value="RNA_pol_Rpb2_3"/>
    <property type="match status" value="1"/>
</dbReference>
<dbReference type="Pfam" id="PF10385">
    <property type="entry name" value="RNA_pol_Rpb2_45"/>
    <property type="match status" value="1"/>
</dbReference>
<dbReference type="Pfam" id="PF00562">
    <property type="entry name" value="RNA_pol_Rpb2_6"/>
    <property type="match status" value="1"/>
</dbReference>
<dbReference type="Pfam" id="PF04560">
    <property type="entry name" value="RNA_pol_Rpb2_7"/>
    <property type="match status" value="1"/>
</dbReference>
<dbReference type="SUPFAM" id="SSF64484">
    <property type="entry name" value="beta and beta-prime subunits of DNA dependent RNA-polymerase"/>
    <property type="match status" value="1"/>
</dbReference>
<dbReference type="PROSITE" id="PS01166">
    <property type="entry name" value="RNA_POL_BETA"/>
    <property type="match status" value="1"/>
</dbReference>
<feature type="chain" id="PRO_1000086374" description="DNA-directed RNA polymerase subunit beta">
    <location>
        <begin position="1"/>
        <end position="1174"/>
    </location>
</feature>
<sequence>MLEGCILAGSRQIESTTNNSVPGAPNRISFAKLREPLEVPGLLDVQTESFEWLIGAEDWFQRAVDRGDVDPKGGLQEVLEELSPIEDFSGSMSLSFSDPRFDEVKAPVDECKDKDMTYAAPLFVTAEFINNNTGEIKSQTVFMGDFPMMTEKGTFIINGTERVVVSQLVRSPGVYFDESIDKSTEKTLHSVKVIPGRGAWLEFDVDKRDTVGVRIDRKRRQPVTVLLKALGWTNEQIVERFGFSEIMMSTLEKDNTAGTDEALLDIYRKLRPGEPPTKESAQTLLENLFFKEKRYDLARVGRYKVNKKLGLNVGQPITSSTLTEEDVVATIEYLVRLHQGDQTMTAPGGSEVPVEVDDIDHFGNRRLRTVGELIQNQIRVGLSRMERVVRERMTTQDVEAITPQTLINIRPVVAAIKEFFGTSQLSQFMDQNNPLSGLTHKRRLSALGPGGLSRERAGLEVRDVHSSHYGRMCPIETPEGPNIGLIGSLSVYARVNPFGFIETPYRKVVDGVVSDQIDYLTADEEDRHVVAQANSPLDGDGRFEEERVLVRRKGGEVEFVSASEVDYMDVSPRQMVSVATAMIPFLEHDDANRALMGANMQRQAVPLVRSEAPLVGTGMELRAAIDAGDVVVTDKAGVVEEVSADYITVMADDGTRHTYRMRKFARSNHGTCANQRPIVDAGQRVETGQVLADGPCTENGEMALGKNLLVAIMPWEGHNYEDAIILSNRLVEEDVLTSIHIEEHEIDARDTKLGAEEITRDIPNVSDEVLADLDERGIIRIGAEVRDGDILVGKVTPKGETELTPEERLLRAIFGEKAREVRDTSLKVPHGESGKVIGIRVFSREDDDELPAGVNELVRVYVAQKRKISDGDKLAGRHGNKGVIGKILPVEDMPFLPDGTPVDIILNTHGVPRRMNIGQILETHLGWVAKAGWNIRLASDGADGSTEVPAWAAKLPEHMLSAPADSIVATPVFDGAQEGELQGLLGATLPNRDGETMVNSDGKAVLFDGRSGEPFPYPVTVGYMYILKLHHLVDDKIHARSTGPYSMITQQPLGGKAQFGGQRFGEMECWAMQAYGAAYTLQELLTIKSDDTVGRVKVYEAIVKGENIPEPGIPESFKVLLKELQSLCLNVEVLSSDGAAIEMRDGDDEDLERAAANLGINLSRNESASVEDLA</sequence>
<accession>A4T1P4</accession>
<proteinExistence type="inferred from homology"/>